<evidence type="ECO:0000255" key="1">
    <source>
        <dbReference type="HAMAP-Rule" id="MF_01371"/>
    </source>
</evidence>
<evidence type="ECO:0000305" key="2"/>
<gene>
    <name evidence="1" type="primary">rpmD</name>
    <name type="ordered locus">BSUIS_A1264</name>
</gene>
<sequence>MAEKKGKTVTVEQIGSPIRRPAEQRATLIGLGLNKMHRRSTLEDTPAVRGMIAKLPHLVRVVDEA</sequence>
<protein>
    <recommendedName>
        <fullName evidence="1">Large ribosomal subunit protein uL30</fullName>
    </recommendedName>
    <alternativeName>
        <fullName evidence="2">50S ribosomal protein L30</fullName>
    </alternativeName>
</protein>
<dbReference type="EMBL" id="CP000911">
    <property type="protein sequence ID" value="ABY38315.1"/>
    <property type="molecule type" value="Genomic_DNA"/>
</dbReference>
<dbReference type="RefSeq" id="WP_002967737.1">
    <property type="nucleotide sequence ID" value="NC_010169.1"/>
</dbReference>
<dbReference type="SMR" id="B0CH14"/>
<dbReference type="GeneID" id="97533542"/>
<dbReference type="KEGG" id="bmt:BSUIS_A1264"/>
<dbReference type="HOGENOM" id="CLU_131047_1_2_5"/>
<dbReference type="Proteomes" id="UP000008545">
    <property type="component" value="Chromosome I"/>
</dbReference>
<dbReference type="GO" id="GO:0022625">
    <property type="term" value="C:cytosolic large ribosomal subunit"/>
    <property type="evidence" value="ECO:0007669"/>
    <property type="project" value="TreeGrafter"/>
</dbReference>
<dbReference type="GO" id="GO:0003735">
    <property type="term" value="F:structural constituent of ribosome"/>
    <property type="evidence" value="ECO:0007669"/>
    <property type="project" value="InterPro"/>
</dbReference>
<dbReference type="GO" id="GO:0006412">
    <property type="term" value="P:translation"/>
    <property type="evidence" value="ECO:0007669"/>
    <property type="project" value="UniProtKB-UniRule"/>
</dbReference>
<dbReference type="CDD" id="cd01658">
    <property type="entry name" value="Ribosomal_L30"/>
    <property type="match status" value="1"/>
</dbReference>
<dbReference type="Gene3D" id="3.30.1390.20">
    <property type="entry name" value="Ribosomal protein L30, ferredoxin-like fold domain"/>
    <property type="match status" value="1"/>
</dbReference>
<dbReference type="HAMAP" id="MF_01371_B">
    <property type="entry name" value="Ribosomal_uL30_B"/>
    <property type="match status" value="1"/>
</dbReference>
<dbReference type="InterPro" id="IPR036919">
    <property type="entry name" value="Ribo_uL30_ferredoxin-like_sf"/>
</dbReference>
<dbReference type="InterPro" id="IPR005996">
    <property type="entry name" value="Ribosomal_uL30_bac-type"/>
</dbReference>
<dbReference type="InterPro" id="IPR016082">
    <property type="entry name" value="Ribosomal_uL30_ferredoxin-like"/>
</dbReference>
<dbReference type="NCBIfam" id="TIGR01308">
    <property type="entry name" value="rpmD_bact"/>
    <property type="match status" value="1"/>
</dbReference>
<dbReference type="PANTHER" id="PTHR15892:SF2">
    <property type="entry name" value="LARGE RIBOSOMAL SUBUNIT PROTEIN UL30M"/>
    <property type="match status" value="1"/>
</dbReference>
<dbReference type="PANTHER" id="PTHR15892">
    <property type="entry name" value="MITOCHONDRIAL RIBOSOMAL PROTEIN L30"/>
    <property type="match status" value="1"/>
</dbReference>
<dbReference type="Pfam" id="PF00327">
    <property type="entry name" value="Ribosomal_L30"/>
    <property type="match status" value="1"/>
</dbReference>
<dbReference type="PIRSF" id="PIRSF002211">
    <property type="entry name" value="Ribosomal_L30_bac-type"/>
    <property type="match status" value="1"/>
</dbReference>
<dbReference type="SUPFAM" id="SSF55129">
    <property type="entry name" value="Ribosomal protein L30p/L7e"/>
    <property type="match status" value="1"/>
</dbReference>
<feature type="chain" id="PRO_0000347088" description="Large ribosomal subunit protein uL30">
    <location>
        <begin position="1"/>
        <end position="65"/>
    </location>
</feature>
<keyword id="KW-0687">Ribonucleoprotein</keyword>
<keyword id="KW-0689">Ribosomal protein</keyword>
<organism>
    <name type="scientific">Brucella suis (strain ATCC 23445 / NCTC 10510)</name>
    <dbReference type="NCBI Taxonomy" id="470137"/>
    <lineage>
        <taxon>Bacteria</taxon>
        <taxon>Pseudomonadati</taxon>
        <taxon>Pseudomonadota</taxon>
        <taxon>Alphaproteobacteria</taxon>
        <taxon>Hyphomicrobiales</taxon>
        <taxon>Brucellaceae</taxon>
        <taxon>Brucella/Ochrobactrum group</taxon>
        <taxon>Brucella</taxon>
    </lineage>
</organism>
<name>RL30_BRUSI</name>
<reference key="1">
    <citation type="submission" date="2007-12" db="EMBL/GenBank/DDBJ databases">
        <title>Brucella suis ATCC 23445 whole genome shotgun sequencing project.</title>
        <authorList>
            <person name="Setubal J.C."/>
            <person name="Bowns C."/>
            <person name="Boyle S."/>
            <person name="Crasta O.R."/>
            <person name="Czar M.J."/>
            <person name="Dharmanolla C."/>
            <person name="Gillespie J.J."/>
            <person name="Kenyon R.W."/>
            <person name="Lu J."/>
            <person name="Mane S."/>
            <person name="Mohapatra S."/>
            <person name="Nagrani S."/>
            <person name="Purkayastha A."/>
            <person name="Rajasimha H.K."/>
            <person name="Shallom J.M."/>
            <person name="Shallom S."/>
            <person name="Shukla M."/>
            <person name="Snyder E.E."/>
            <person name="Sobral B.W."/>
            <person name="Wattam A.R."/>
            <person name="Will R."/>
            <person name="Williams K."/>
            <person name="Yoo H."/>
            <person name="Bruce D."/>
            <person name="Detter C."/>
            <person name="Munk C."/>
            <person name="Brettin T.S."/>
        </authorList>
    </citation>
    <scope>NUCLEOTIDE SEQUENCE [LARGE SCALE GENOMIC DNA]</scope>
    <source>
        <strain>ATCC 23445 / NCTC 10510</strain>
    </source>
</reference>
<accession>B0CH14</accession>
<comment type="subunit">
    <text evidence="1">Part of the 50S ribosomal subunit.</text>
</comment>
<comment type="similarity">
    <text evidence="1">Belongs to the universal ribosomal protein uL30 family.</text>
</comment>
<proteinExistence type="inferred from homology"/>